<keyword id="KW-1185">Reference proteome</keyword>
<proteinExistence type="inferred from homology"/>
<reference key="1">
    <citation type="submission" date="2007-08" db="EMBL/GenBank/DDBJ databases">
        <title>Complete sequence of Thermotoga lettingae TMO.</title>
        <authorList>
            <consortium name="US DOE Joint Genome Institute"/>
            <person name="Copeland A."/>
            <person name="Lucas S."/>
            <person name="Lapidus A."/>
            <person name="Barry K."/>
            <person name="Glavina del Rio T."/>
            <person name="Dalin E."/>
            <person name="Tice H."/>
            <person name="Pitluck S."/>
            <person name="Foster B."/>
            <person name="Bruce D."/>
            <person name="Schmutz J."/>
            <person name="Larimer F."/>
            <person name="Land M."/>
            <person name="Hauser L."/>
            <person name="Kyrpides N."/>
            <person name="Mikhailova N."/>
            <person name="Nelson K."/>
            <person name="Gogarten J.P."/>
            <person name="Noll K."/>
            <person name="Richardson P."/>
        </authorList>
    </citation>
    <scope>NUCLEOTIDE SEQUENCE [LARGE SCALE GENOMIC DNA]</scope>
    <source>
        <strain>ATCC BAA-301 / DSM 14385 / NBRC 107922 / TMO</strain>
    </source>
</reference>
<dbReference type="EMBL" id="CP000812">
    <property type="protein sequence ID" value="ABV33233.1"/>
    <property type="molecule type" value="Genomic_DNA"/>
</dbReference>
<dbReference type="RefSeq" id="WP_012002714.1">
    <property type="nucleotide sequence ID" value="NZ_BSDV01000001.1"/>
</dbReference>
<dbReference type="SMR" id="A8F4Z9"/>
<dbReference type="STRING" id="416591.Tlet_0667"/>
<dbReference type="KEGG" id="tle:Tlet_0667"/>
<dbReference type="eggNOG" id="COG0792">
    <property type="taxonomic scope" value="Bacteria"/>
</dbReference>
<dbReference type="HOGENOM" id="CLU_115353_3_1_0"/>
<dbReference type="OrthoDB" id="9802516at2"/>
<dbReference type="Proteomes" id="UP000002016">
    <property type="component" value="Chromosome"/>
</dbReference>
<dbReference type="GO" id="GO:0003676">
    <property type="term" value="F:nucleic acid binding"/>
    <property type="evidence" value="ECO:0007669"/>
    <property type="project" value="InterPro"/>
</dbReference>
<dbReference type="Gene3D" id="3.40.1350.10">
    <property type="match status" value="1"/>
</dbReference>
<dbReference type="HAMAP" id="MF_00048">
    <property type="entry name" value="UPF0102"/>
    <property type="match status" value="1"/>
</dbReference>
<dbReference type="InterPro" id="IPR011335">
    <property type="entry name" value="Restrct_endonuc-II-like"/>
</dbReference>
<dbReference type="InterPro" id="IPR011856">
    <property type="entry name" value="tRNA_endonuc-like_dom_sf"/>
</dbReference>
<dbReference type="InterPro" id="IPR003509">
    <property type="entry name" value="UPF0102_YraN-like"/>
</dbReference>
<dbReference type="NCBIfam" id="NF011270">
    <property type="entry name" value="PRK14677.1"/>
    <property type="match status" value="1"/>
</dbReference>
<dbReference type="PANTHER" id="PTHR34039">
    <property type="entry name" value="UPF0102 PROTEIN YRAN"/>
    <property type="match status" value="1"/>
</dbReference>
<dbReference type="PANTHER" id="PTHR34039:SF1">
    <property type="entry name" value="UPF0102 PROTEIN YRAN"/>
    <property type="match status" value="1"/>
</dbReference>
<dbReference type="Pfam" id="PF02021">
    <property type="entry name" value="UPF0102"/>
    <property type="match status" value="1"/>
</dbReference>
<dbReference type="SUPFAM" id="SSF52980">
    <property type="entry name" value="Restriction endonuclease-like"/>
    <property type="match status" value="1"/>
</dbReference>
<feature type="chain" id="PRO_0000336278" description="UPF0102 protein Tlet_0667">
    <location>
        <begin position="1"/>
        <end position="107"/>
    </location>
</feature>
<evidence type="ECO:0000255" key="1">
    <source>
        <dbReference type="HAMAP-Rule" id="MF_00048"/>
    </source>
</evidence>
<organism>
    <name type="scientific">Pseudothermotoga lettingae (strain ATCC BAA-301 / DSM 14385 / NBRC 107922 / TMO)</name>
    <name type="common">Thermotoga lettingae</name>
    <dbReference type="NCBI Taxonomy" id="416591"/>
    <lineage>
        <taxon>Bacteria</taxon>
        <taxon>Thermotogati</taxon>
        <taxon>Thermotogota</taxon>
        <taxon>Thermotogae</taxon>
        <taxon>Thermotogales</taxon>
        <taxon>Thermotogaceae</taxon>
        <taxon>Pseudothermotoga</taxon>
    </lineage>
</organism>
<comment type="similarity">
    <text evidence="1">Belongs to the UPF0102 family.</text>
</comment>
<gene>
    <name type="ordered locus">Tlet_0667</name>
</gene>
<sequence>MNWKEAEEKASRYLRHKGFKILARNYRTRFGEIDIIARYRGYLVFVEVKSGNSFFLPRTRVDLQKIRHIQLAANDYIMNTKDSFKGYRIDVIEVTEKGIEHFEDIQI</sequence>
<protein>
    <recommendedName>
        <fullName evidence="1">UPF0102 protein Tlet_0667</fullName>
    </recommendedName>
</protein>
<accession>A8F4Z9</accession>
<name>Y667_PSELT</name>